<evidence type="ECO:0000255" key="1">
    <source>
        <dbReference type="HAMAP-Rule" id="MF_00352"/>
    </source>
</evidence>
<evidence type="ECO:0007829" key="2">
    <source>
        <dbReference type="PDB" id="2YNM"/>
    </source>
</evidence>
<keyword id="KW-0002">3D-structure</keyword>
<keyword id="KW-0004">4Fe-4S</keyword>
<keyword id="KW-0067">ATP-binding</keyword>
<keyword id="KW-0149">Chlorophyll biosynthesis</keyword>
<keyword id="KW-0408">Iron</keyword>
<keyword id="KW-0411">Iron-sulfur</keyword>
<keyword id="KW-0479">Metal-binding</keyword>
<keyword id="KW-0547">Nucleotide-binding</keyword>
<keyword id="KW-0560">Oxidoreductase</keyword>
<keyword id="KW-0602">Photosynthesis</keyword>
<keyword id="KW-1185">Reference proteome</keyword>
<sequence>MSGSTLLKETGPREVFCGLTSIVWLHRRMPDAFFLVVGSRTCAHLIQSAAGVMIFAEPRFGTAILEERDLAGLADAHEELDRVVKSLLKRRPEIRTLFLVGSCPSEVIKIDLSRAAERLSSQFNGQVRILNYSGSGIETTFTQGEDGALKALVPLMPSSQEEQLLLAGTLANPVEDRLKTIFNRLGIQKVESFPPRESTKLPAIGPGTKVLLAQPYLTDTARELKDRGAEILQAPFPLGVEGSQLWIEAAANAFKIKKTLVDATLEPLITRAHKALKPYVEQLSGKKLFLLPESQLEIPLARFLSNECGMKLIEVGVPYLNREMMGPELDLLPQNTRIVEGQHVEKQLDRVREHHPDLVVCGMGLANPLEAEGISTKWSIEMVFSPIHGIDQASDLAELFARPLHRQNLLNKKTLEAV</sequence>
<protein>
    <recommendedName>
        <fullName evidence="1">Light-independent protochlorophyllide reductase subunit N</fullName>
        <shortName evidence="1">DPOR subunit N</shortName>
        <shortName evidence="1">LI-POR subunit N</shortName>
        <ecNumber evidence="1">1.3.7.7</ecNumber>
    </recommendedName>
</protein>
<organism>
    <name type="scientific">Prochlorococcus marinus (strain SARG / CCMP1375 / SS120)</name>
    <dbReference type="NCBI Taxonomy" id="167539"/>
    <lineage>
        <taxon>Bacteria</taxon>
        <taxon>Bacillati</taxon>
        <taxon>Cyanobacteriota</taxon>
        <taxon>Cyanophyceae</taxon>
        <taxon>Synechococcales</taxon>
        <taxon>Prochlorococcaceae</taxon>
        <taxon>Prochlorococcus</taxon>
    </lineage>
</organism>
<proteinExistence type="evidence at protein level"/>
<accession>Q7VD37</accession>
<gene>
    <name evidence="1" type="primary">chlN</name>
    <name type="ordered locus">Pro_0546</name>
</gene>
<dbReference type="EC" id="1.3.7.7" evidence="1"/>
<dbReference type="EMBL" id="AE017126">
    <property type="protein sequence ID" value="AAP99591.1"/>
    <property type="molecule type" value="Genomic_DNA"/>
</dbReference>
<dbReference type="RefSeq" id="NP_874939.1">
    <property type="nucleotide sequence ID" value="NC_005042.1"/>
</dbReference>
<dbReference type="RefSeq" id="WP_011124700.1">
    <property type="nucleotide sequence ID" value="NC_005042.1"/>
</dbReference>
<dbReference type="PDB" id="2YNM">
    <property type="method" value="X-ray"/>
    <property type="resolution" value="2.10 A"/>
    <property type="chains" value="C=1-418"/>
</dbReference>
<dbReference type="PDBsum" id="2YNM"/>
<dbReference type="SMR" id="Q7VD37"/>
<dbReference type="IntAct" id="Q7VD37">
    <property type="interactions" value="1"/>
</dbReference>
<dbReference type="STRING" id="167539.Pro_0546"/>
<dbReference type="EnsemblBacteria" id="AAP99591">
    <property type="protein sequence ID" value="AAP99591"/>
    <property type="gene ID" value="Pro_0546"/>
</dbReference>
<dbReference type="KEGG" id="pma:Pro_0546"/>
<dbReference type="PATRIC" id="fig|167539.5.peg.561"/>
<dbReference type="eggNOG" id="COG2710">
    <property type="taxonomic scope" value="Bacteria"/>
</dbReference>
<dbReference type="HOGENOM" id="CLU_037170_0_0_3"/>
<dbReference type="OrthoDB" id="5714774at2"/>
<dbReference type="UniPathway" id="UPA00670"/>
<dbReference type="EvolutionaryTrace" id="Q7VD37"/>
<dbReference type="Proteomes" id="UP000001420">
    <property type="component" value="Chromosome"/>
</dbReference>
<dbReference type="GO" id="GO:0051539">
    <property type="term" value="F:4 iron, 4 sulfur cluster binding"/>
    <property type="evidence" value="ECO:0007669"/>
    <property type="project" value="UniProtKB-UniRule"/>
</dbReference>
<dbReference type="GO" id="GO:0005524">
    <property type="term" value="F:ATP binding"/>
    <property type="evidence" value="ECO:0007669"/>
    <property type="project" value="UniProtKB-UniRule"/>
</dbReference>
<dbReference type="GO" id="GO:0046872">
    <property type="term" value="F:metal ion binding"/>
    <property type="evidence" value="ECO:0007669"/>
    <property type="project" value="UniProtKB-KW"/>
</dbReference>
<dbReference type="GO" id="GO:0016730">
    <property type="term" value="F:oxidoreductase activity, acting on iron-sulfur proteins as donors"/>
    <property type="evidence" value="ECO:0007669"/>
    <property type="project" value="InterPro"/>
</dbReference>
<dbReference type="GO" id="GO:0016636">
    <property type="term" value="F:oxidoreductase activity, acting on the CH-CH group of donors, iron-sulfur protein as acceptor"/>
    <property type="evidence" value="ECO:0007669"/>
    <property type="project" value="UniProtKB-UniRule"/>
</dbReference>
<dbReference type="GO" id="GO:0036068">
    <property type="term" value="P:light-independent chlorophyll biosynthetic process"/>
    <property type="evidence" value="ECO:0007669"/>
    <property type="project" value="UniProtKB-UniRule"/>
</dbReference>
<dbReference type="GO" id="GO:0019685">
    <property type="term" value="P:photosynthesis, dark reaction"/>
    <property type="evidence" value="ECO:0007669"/>
    <property type="project" value="InterPro"/>
</dbReference>
<dbReference type="Gene3D" id="3.40.50.1980">
    <property type="entry name" value="Nitrogenase molybdenum iron protein domain"/>
    <property type="match status" value="3"/>
</dbReference>
<dbReference type="HAMAP" id="MF_00352">
    <property type="entry name" value="ChlN_BchN"/>
    <property type="match status" value="1"/>
</dbReference>
<dbReference type="InterPro" id="IPR050293">
    <property type="entry name" value="LIPOR_BchN/ChlN"/>
</dbReference>
<dbReference type="InterPro" id="IPR000510">
    <property type="entry name" value="Nase/OxRdtase_comp1"/>
</dbReference>
<dbReference type="InterPro" id="IPR005970">
    <property type="entry name" value="Protochl_reductN"/>
</dbReference>
<dbReference type="NCBIfam" id="TIGR01279">
    <property type="entry name" value="DPOR_bchN"/>
    <property type="match status" value="1"/>
</dbReference>
<dbReference type="NCBIfam" id="NF002768">
    <property type="entry name" value="PRK02842.1"/>
    <property type="match status" value="1"/>
</dbReference>
<dbReference type="PANTHER" id="PTHR39429">
    <property type="entry name" value="LIGHT-INDEPENDENT PROTOCHLOROPHYLLIDE REDUCTASE SUBUNIT N"/>
    <property type="match status" value="1"/>
</dbReference>
<dbReference type="PANTHER" id="PTHR39429:SF3">
    <property type="entry name" value="LIGHT-INDEPENDENT PROTOCHLOROPHYLLIDE REDUCTASE SUBUNIT N"/>
    <property type="match status" value="1"/>
</dbReference>
<dbReference type="Pfam" id="PF00148">
    <property type="entry name" value="Oxidored_nitro"/>
    <property type="match status" value="1"/>
</dbReference>
<dbReference type="PIRSF" id="PIRSF000162">
    <property type="entry name" value="P_chlorophyll_rd"/>
    <property type="match status" value="1"/>
</dbReference>
<dbReference type="SUPFAM" id="SSF53807">
    <property type="entry name" value="Helical backbone' metal receptor"/>
    <property type="match status" value="1"/>
</dbReference>
<reference key="1">
    <citation type="journal article" date="2003" name="Proc. Natl. Acad. Sci. U.S.A.">
        <title>Genome sequence of the cyanobacterium Prochlorococcus marinus SS120, a nearly minimal oxyphototrophic genome.</title>
        <authorList>
            <person name="Dufresne A."/>
            <person name="Salanoubat M."/>
            <person name="Partensky F."/>
            <person name="Artiguenave F."/>
            <person name="Axmann I.M."/>
            <person name="Barbe V."/>
            <person name="Duprat S."/>
            <person name="Galperin M.Y."/>
            <person name="Koonin E.V."/>
            <person name="Le Gall F."/>
            <person name="Makarova K.S."/>
            <person name="Ostrowski M."/>
            <person name="Oztas S."/>
            <person name="Robert C."/>
            <person name="Rogozin I.B."/>
            <person name="Scanlan D.J."/>
            <person name="Tandeau de Marsac N."/>
            <person name="Weissenbach J."/>
            <person name="Wincker P."/>
            <person name="Wolf Y.I."/>
            <person name="Hess W.R."/>
        </authorList>
    </citation>
    <scope>NUCLEOTIDE SEQUENCE [LARGE SCALE GENOMIC DNA]</scope>
    <source>
        <strain>SARG / CCMP1375 / SS120</strain>
    </source>
</reference>
<comment type="function">
    <text evidence="1">Component of the dark-operative protochlorophyllide reductase (DPOR) that uses Mg-ATP and reduced ferredoxin to reduce ring D of protochlorophyllide (Pchlide) to form chlorophyllide a (Chlide). This reaction is light-independent. The NB-protein (ChlN-ChlB) is the catalytic component of the complex.</text>
</comment>
<comment type="catalytic activity">
    <reaction evidence="1">
        <text>chlorophyllide a + oxidized 2[4Fe-4S]-[ferredoxin] + 2 ADP + 2 phosphate = protochlorophyllide a + reduced 2[4Fe-4S]-[ferredoxin] + 2 ATP + 2 H2O</text>
        <dbReference type="Rhea" id="RHEA:28202"/>
        <dbReference type="Rhea" id="RHEA-COMP:10002"/>
        <dbReference type="Rhea" id="RHEA-COMP:10004"/>
        <dbReference type="ChEBI" id="CHEBI:15377"/>
        <dbReference type="ChEBI" id="CHEBI:30616"/>
        <dbReference type="ChEBI" id="CHEBI:33722"/>
        <dbReference type="ChEBI" id="CHEBI:33723"/>
        <dbReference type="ChEBI" id="CHEBI:43474"/>
        <dbReference type="ChEBI" id="CHEBI:83348"/>
        <dbReference type="ChEBI" id="CHEBI:83350"/>
        <dbReference type="ChEBI" id="CHEBI:456216"/>
        <dbReference type="EC" id="1.3.7.7"/>
    </reaction>
</comment>
<comment type="cofactor">
    <cofactor evidence="1">
        <name>[4Fe-4S] cluster</name>
        <dbReference type="ChEBI" id="CHEBI:49883"/>
    </cofactor>
    <text evidence="1">Binds 1 [4Fe-4S] cluster per heterodimer. The cluster is bound at the heterodimer interface by residues from both subunits.</text>
</comment>
<comment type="pathway">
    <text evidence="1">Porphyrin-containing compound metabolism; chlorophyll biosynthesis (light-independent).</text>
</comment>
<comment type="subunit">
    <text evidence="1">Protochlorophyllide reductase is composed of three subunits; ChlL, ChlN and ChlB. Forms a heterotetramer of two ChlB and two ChlN subunits.</text>
</comment>
<comment type="similarity">
    <text evidence="1">Belongs to the BchN/ChlN family.</text>
</comment>
<name>CHLN_PROMA</name>
<feature type="chain" id="PRO_0000324008" description="Light-independent protochlorophyllide reductase subunit N">
    <location>
        <begin position="1"/>
        <end position="418"/>
    </location>
</feature>
<feature type="binding site" evidence="1">
    <location>
        <position position="17"/>
    </location>
    <ligand>
        <name>[4Fe-4S] cluster</name>
        <dbReference type="ChEBI" id="CHEBI:49883"/>
        <note>ligand shared with heterodimeric partner</note>
    </ligand>
</feature>
<feature type="binding site" evidence="1">
    <location>
        <position position="42"/>
    </location>
    <ligand>
        <name>[4Fe-4S] cluster</name>
        <dbReference type="ChEBI" id="CHEBI:49883"/>
        <note>ligand shared with heterodimeric partner</note>
    </ligand>
</feature>
<feature type="binding site" evidence="1">
    <location>
        <position position="103"/>
    </location>
    <ligand>
        <name>[4Fe-4S] cluster</name>
        <dbReference type="ChEBI" id="CHEBI:49883"/>
        <note>ligand shared with heterodimeric partner</note>
    </ligand>
</feature>
<feature type="strand" evidence="2">
    <location>
        <begin position="4"/>
        <end position="9"/>
    </location>
</feature>
<feature type="helix" evidence="2">
    <location>
        <begin position="18"/>
        <end position="21"/>
    </location>
</feature>
<feature type="helix" evidence="2">
    <location>
        <begin position="22"/>
        <end position="28"/>
    </location>
</feature>
<feature type="strand" evidence="2">
    <location>
        <begin position="32"/>
        <end position="38"/>
    </location>
</feature>
<feature type="helix" evidence="2">
    <location>
        <begin position="40"/>
        <end position="50"/>
    </location>
</feature>
<feature type="strand" evidence="2">
    <location>
        <begin position="60"/>
        <end position="64"/>
    </location>
</feature>
<feature type="helix" evidence="2">
    <location>
        <begin position="67"/>
        <end position="70"/>
    </location>
</feature>
<feature type="helix" evidence="2">
    <location>
        <begin position="76"/>
        <end position="90"/>
    </location>
</feature>
<feature type="strand" evidence="2">
    <location>
        <begin position="95"/>
        <end position="101"/>
    </location>
</feature>
<feature type="helix" evidence="2">
    <location>
        <begin position="103"/>
        <end position="107"/>
    </location>
</feature>
<feature type="helix" evidence="2">
    <location>
        <begin position="112"/>
        <end position="123"/>
    </location>
</feature>
<feature type="strand" evidence="2">
    <location>
        <begin position="124"/>
        <end position="126"/>
    </location>
</feature>
<feature type="strand" evidence="2">
    <location>
        <begin position="128"/>
        <end position="133"/>
    </location>
</feature>
<feature type="turn" evidence="2">
    <location>
        <begin position="136"/>
        <end position="138"/>
    </location>
</feature>
<feature type="helix" evidence="2">
    <location>
        <begin position="143"/>
        <end position="152"/>
    </location>
</feature>
<feature type="helix" evidence="2">
    <location>
        <begin position="153"/>
        <end position="155"/>
    </location>
</feature>
<feature type="strand" evidence="2">
    <location>
        <begin position="163"/>
        <end position="168"/>
    </location>
</feature>
<feature type="helix" evidence="2">
    <location>
        <begin position="172"/>
        <end position="184"/>
    </location>
</feature>
<feature type="strand" evidence="2">
    <location>
        <begin position="190"/>
        <end position="194"/>
    </location>
</feature>
<feature type="strand" evidence="2">
    <location>
        <begin position="208"/>
        <end position="214"/>
    </location>
</feature>
<feature type="helix" evidence="2">
    <location>
        <begin position="218"/>
        <end position="226"/>
    </location>
</feature>
<feature type="helix" evidence="2">
    <location>
        <begin position="239"/>
        <end position="253"/>
    </location>
</feature>
<feature type="helix" evidence="2">
    <location>
        <begin position="258"/>
        <end position="283"/>
    </location>
</feature>
<feature type="strand" evidence="2">
    <location>
        <begin position="287"/>
        <end position="290"/>
    </location>
</feature>
<feature type="strand" evidence="2">
    <location>
        <begin position="292"/>
        <end position="295"/>
    </location>
</feature>
<feature type="helix" evidence="2">
    <location>
        <begin position="297"/>
        <end position="306"/>
    </location>
</feature>
<feature type="strand" evidence="2">
    <location>
        <begin position="311"/>
        <end position="318"/>
    </location>
</feature>
<feature type="turn" evidence="2">
    <location>
        <begin position="322"/>
        <end position="324"/>
    </location>
</feature>
<feature type="helix" evidence="2">
    <location>
        <begin position="326"/>
        <end position="331"/>
    </location>
</feature>
<feature type="strand" evidence="2">
    <location>
        <begin position="337"/>
        <end position="341"/>
    </location>
</feature>
<feature type="helix" evidence="2">
    <location>
        <begin position="344"/>
        <end position="354"/>
    </location>
</feature>
<feature type="strand" evidence="2">
    <location>
        <begin position="357"/>
        <end position="361"/>
    </location>
</feature>
<feature type="turn" evidence="2">
    <location>
        <begin position="363"/>
        <end position="365"/>
    </location>
</feature>
<feature type="helix" evidence="2">
    <location>
        <begin position="366"/>
        <end position="371"/>
    </location>
</feature>
<feature type="strand" evidence="2">
    <location>
        <begin position="376"/>
        <end position="378"/>
    </location>
</feature>
<feature type="helix" evidence="2">
    <location>
        <begin position="379"/>
        <end position="384"/>
    </location>
</feature>
<feature type="helix" evidence="2">
    <location>
        <begin position="390"/>
        <end position="392"/>
    </location>
</feature>
<feature type="helix" evidence="2">
    <location>
        <begin position="393"/>
        <end position="410"/>
    </location>
</feature>